<name>TRUA_STRMK</name>
<keyword id="KW-0413">Isomerase</keyword>
<keyword id="KW-1185">Reference proteome</keyword>
<keyword id="KW-0819">tRNA processing</keyword>
<evidence type="ECO:0000255" key="1">
    <source>
        <dbReference type="HAMAP-Rule" id="MF_00171"/>
    </source>
</evidence>
<feature type="chain" id="PRO_1000097790" description="tRNA pseudouridine synthase A">
    <location>
        <begin position="1"/>
        <end position="256"/>
    </location>
</feature>
<feature type="active site" description="Nucleophile" evidence="1">
    <location>
        <position position="52"/>
    </location>
</feature>
<feature type="binding site" evidence="1">
    <location>
        <position position="110"/>
    </location>
    <ligand>
        <name>substrate</name>
    </ligand>
</feature>
<comment type="function">
    <text evidence="1">Formation of pseudouridine at positions 38, 39 and 40 in the anticodon stem and loop of transfer RNAs.</text>
</comment>
<comment type="catalytic activity">
    <reaction evidence="1">
        <text>uridine(38/39/40) in tRNA = pseudouridine(38/39/40) in tRNA</text>
        <dbReference type="Rhea" id="RHEA:22376"/>
        <dbReference type="Rhea" id="RHEA-COMP:10085"/>
        <dbReference type="Rhea" id="RHEA-COMP:10087"/>
        <dbReference type="ChEBI" id="CHEBI:65314"/>
        <dbReference type="ChEBI" id="CHEBI:65315"/>
        <dbReference type="EC" id="5.4.99.12"/>
    </reaction>
</comment>
<comment type="subunit">
    <text evidence="1">Homodimer.</text>
</comment>
<comment type="similarity">
    <text evidence="1">Belongs to the tRNA pseudouridine synthase TruA family.</text>
</comment>
<dbReference type="EC" id="5.4.99.12" evidence="1"/>
<dbReference type="EMBL" id="AM743169">
    <property type="protein sequence ID" value="CAQ46850.1"/>
    <property type="molecule type" value="Genomic_DNA"/>
</dbReference>
<dbReference type="RefSeq" id="WP_012480891.1">
    <property type="nucleotide sequence ID" value="NC_010943.1"/>
</dbReference>
<dbReference type="SMR" id="B2FNZ6"/>
<dbReference type="EnsemblBacteria" id="CAQ46850">
    <property type="protein sequence ID" value="CAQ46850"/>
    <property type="gene ID" value="Smlt3424"/>
</dbReference>
<dbReference type="KEGG" id="sml:Smlt3424"/>
<dbReference type="eggNOG" id="COG0101">
    <property type="taxonomic scope" value="Bacteria"/>
</dbReference>
<dbReference type="HOGENOM" id="CLU_014673_0_2_6"/>
<dbReference type="Proteomes" id="UP000008840">
    <property type="component" value="Chromosome"/>
</dbReference>
<dbReference type="GO" id="GO:0003723">
    <property type="term" value="F:RNA binding"/>
    <property type="evidence" value="ECO:0007669"/>
    <property type="project" value="InterPro"/>
</dbReference>
<dbReference type="GO" id="GO:0160147">
    <property type="term" value="F:tRNA pseudouridine(38-40) synthase activity"/>
    <property type="evidence" value="ECO:0007669"/>
    <property type="project" value="UniProtKB-EC"/>
</dbReference>
<dbReference type="GO" id="GO:0031119">
    <property type="term" value="P:tRNA pseudouridine synthesis"/>
    <property type="evidence" value="ECO:0007669"/>
    <property type="project" value="UniProtKB-UniRule"/>
</dbReference>
<dbReference type="CDD" id="cd02570">
    <property type="entry name" value="PseudoU_synth_EcTruA"/>
    <property type="match status" value="1"/>
</dbReference>
<dbReference type="FunFam" id="3.30.70.580:FF:000001">
    <property type="entry name" value="tRNA pseudouridine synthase A"/>
    <property type="match status" value="1"/>
</dbReference>
<dbReference type="Gene3D" id="3.30.70.660">
    <property type="entry name" value="Pseudouridine synthase I, catalytic domain, C-terminal subdomain"/>
    <property type="match status" value="1"/>
</dbReference>
<dbReference type="Gene3D" id="3.30.70.580">
    <property type="entry name" value="Pseudouridine synthase I, catalytic domain, N-terminal subdomain"/>
    <property type="match status" value="1"/>
</dbReference>
<dbReference type="HAMAP" id="MF_00171">
    <property type="entry name" value="TruA"/>
    <property type="match status" value="1"/>
</dbReference>
<dbReference type="InterPro" id="IPR020103">
    <property type="entry name" value="PsdUridine_synth_cat_dom_sf"/>
</dbReference>
<dbReference type="InterPro" id="IPR001406">
    <property type="entry name" value="PsdUridine_synth_TruA"/>
</dbReference>
<dbReference type="InterPro" id="IPR020097">
    <property type="entry name" value="PsdUridine_synth_TruA_a/b_dom"/>
</dbReference>
<dbReference type="InterPro" id="IPR020095">
    <property type="entry name" value="PsdUridine_synth_TruA_C"/>
</dbReference>
<dbReference type="InterPro" id="IPR020094">
    <property type="entry name" value="TruA/RsuA/RluB/E/F_N"/>
</dbReference>
<dbReference type="NCBIfam" id="TIGR00071">
    <property type="entry name" value="hisT_truA"/>
    <property type="match status" value="1"/>
</dbReference>
<dbReference type="PANTHER" id="PTHR11142">
    <property type="entry name" value="PSEUDOURIDYLATE SYNTHASE"/>
    <property type="match status" value="1"/>
</dbReference>
<dbReference type="PANTHER" id="PTHR11142:SF0">
    <property type="entry name" value="TRNA PSEUDOURIDINE SYNTHASE-LIKE 1"/>
    <property type="match status" value="1"/>
</dbReference>
<dbReference type="Pfam" id="PF01416">
    <property type="entry name" value="PseudoU_synth_1"/>
    <property type="match status" value="2"/>
</dbReference>
<dbReference type="PIRSF" id="PIRSF001430">
    <property type="entry name" value="tRNA_psdUrid_synth"/>
    <property type="match status" value="1"/>
</dbReference>
<dbReference type="SUPFAM" id="SSF55120">
    <property type="entry name" value="Pseudouridine synthase"/>
    <property type="match status" value="1"/>
</dbReference>
<protein>
    <recommendedName>
        <fullName evidence="1">tRNA pseudouridine synthase A</fullName>
        <ecNumber evidence="1">5.4.99.12</ecNumber>
    </recommendedName>
    <alternativeName>
        <fullName evidence="1">tRNA pseudouridine(38-40) synthase</fullName>
    </alternativeName>
    <alternativeName>
        <fullName evidence="1">tRNA pseudouridylate synthase I</fullName>
    </alternativeName>
    <alternativeName>
        <fullName evidence="1">tRNA-uridine isomerase I</fullName>
    </alternativeName>
</protein>
<organism>
    <name type="scientific">Stenotrophomonas maltophilia (strain K279a)</name>
    <dbReference type="NCBI Taxonomy" id="522373"/>
    <lineage>
        <taxon>Bacteria</taxon>
        <taxon>Pseudomonadati</taxon>
        <taxon>Pseudomonadota</taxon>
        <taxon>Gammaproteobacteria</taxon>
        <taxon>Lysobacterales</taxon>
        <taxon>Lysobacteraceae</taxon>
        <taxon>Stenotrophomonas</taxon>
        <taxon>Stenotrophomonas maltophilia group</taxon>
    </lineage>
</organism>
<sequence>MRYALGVEYDGSDFRGWQNLGEGGPSVQASLEQALSSVADTPLQVVCAGRTDAGVHGQCQVVHFDTDVVRDPRAWMLGTTTRLPRSIAVRWCVPVADDFHARFSARARRYRYRLLNREVRPALDRQTLSWERRALDETLMHAAGQALIGENDFSAFRSVQCQALHARRELQSLQVSRQGEVIEVAVQGNAFLHHMVRNIVGSLILVGSGEKPVEWIAELLAGRDRTVAGPTAPPQGLVFLGPLYPDNWHLPAEVTL</sequence>
<gene>
    <name evidence="1" type="primary">truA</name>
    <name type="ordered locus">Smlt3424</name>
</gene>
<reference key="1">
    <citation type="journal article" date="2008" name="Genome Biol.">
        <title>The complete genome, comparative and functional analysis of Stenotrophomonas maltophilia reveals an organism heavily shielded by drug resistance determinants.</title>
        <authorList>
            <person name="Crossman L.C."/>
            <person name="Gould V.C."/>
            <person name="Dow J.M."/>
            <person name="Vernikos G.S."/>
            <person name="Okazaki A."/>
            <person name="Sebaihia M."/>
            <person name="Saunders D."/>
            <person name="Arrowsmith C."/>
            <person name="Carver T."/>
            <person name="Peters N."/>
            <person name="Adlem E."/>
            <person name="Kerhornou A."/>
            <person name="Lord A."/>
            <person name="Murphy L."/>
            <person name="Seeger K."/>
            <person name="Squares R."/>
            <person name="Rutter S."/>
            <person name="Quail M.A."/>
            <person name="Rajandream M.A."/>
            <person name="Harris D."/>
            <person name="Churcher C."/>
            <person name="Bentley S.D."/>
            <person name="Parkhill J."/>
            <person name="Thomson N.R."/>
            <person name="Avison M.B."/>
        </authorList>
    </citation>
    <scope>NUCLEOTIDE SEQUENCE [LARGE SCALE GENOMIC DNA]</scope>
    <source>
        <strain>K279a</strain>
    </source>
</reference>
<accession>B2FNZ6</accession>
<proteinExistence type="inferred from homology"/>